<feature type="chain" id="PRO_0000266415" description="Guanylate kinase">
    <location>
        <begin position="1"/>
        <end position="211"/>
    </location>
</feature>
<feature type="domain" description="Guanylate kinase-like" evidence="1">
    <location>
        <begin position="5"/>
        <end position="184"/>
    </location>
</feature>
<feature type="binding site" evidence="1">
    <location>
        <begin position="12"/>
        <end position="19"/>
    </location>
    <ligand>
        <name>ATP</name>
        <dbReference type="ChEBI" id="CHEBI:30616"/>
    </ligand>
</feature>
<proteinExistence type="inferred from homology"/>
<protein>
    <recommendedName>
        <fullName evidence="1">Guanylate kinase</fullName>
        <ecNumber evidence="1">2.7.4.8</ecNumber>
    </recommendedName>
    <alternativeName>
        <fullName evidence="1">GMP kinase</fullName>
    </alternativeName>
</protein>
<keyword id="KW-0067">ATP-binding</keyword>
<keyword id="KW-0963">Cytoplasm</keyword>
<keyword id="KW-0418">Kinase</keyword>
<keyword id="KW-0547">Nucleotide-binding</keyword>
<keyword id="KW-0808">Transferase</keyword>
<organism>
    <name type="scientific">Streptococcus pyogenes serotype M2 (strain MGAS10270)</name>
    <dbReference type="NCBI Taxonomy" id="370552"/>
    <lineage>
        <taxon>Bacteria</taxon>
        <taxon>Bacillati</taxon>
        <taxon>Bacillota</taxon>
        <taxon>Bacilli</taxon>
        <taxon>Lactobacillales</taxon>
        <taxon>Streptococcaceae</taxon>
        <taxon>Streptococcus</taxon>
    </lineage>
</organism>
<accession>Q1JFN7</accession>
<name>KGUA_STRPD</name>
<evidence type="ECO:0000255" key="1">
    <source>
        <dbReference type="HAMAP-Rule" id="MF_00328"/>
    </source>
</evidence>
<gene>
    <name evidence="1" type="primary">gmk</name>
    <name type="ordered locus">MGAS10270_Spy1457</name>
</gene>
<dbReference type="EC" id="2.7.4.8" evidence="1"/>
<dbReference type="EMBL" id="CP000260">
    <property type="protein sequence ID" value="ABF34522.1"/>
    <property type="molecule type" value="Genomic_DNA"/>
</dbReference>
<dbReference type="RefSeq" id="WP_002983649.1">
    <property type="nucleotide sequence ID" value="NZ_CVUH01000010.1"/>
</dbReference>
<dbReference type="SMR" id="Q1JFN7"/>
<dbReference type="GeneID" id="69900497"/>
<dbReference type="KEGG" id="sph:MGAS10270_Spy1457"/>
<dbReference type="HOGENOM" id="CLU_001715_1_2_9"/>
<dbReference type="Proteomes" id="UP000002436">
    <property type="component" value="Chromosome"/>
</dbReference>
<dbReference type="GO" id="GO:0005829">
    <property type="term" value="C:cytosol"/>
    <property type="evidence" value="ECO:0007669"/>
    <property type="project" value="TreeGrafter"/>
</dbReference>
<dbReference type="GO" id="GO:0005524">
    <property type="term" value="F:ATP binding"/>
    <property type="evidence" value="ECO:0007669"/>
    <property type="project" value="UniProtKB-UniRule"/>
</dbReference>
<dbReference type="GO" id="GO:0004385">
    <property type="term" value="F:guanylate kinase activity"/>
    <property type="evidence" value="ECO:0007669"/>
    <property type="project" value="UniProtKB-UniRule"/>
</dbReference>
<dbReference type="CDD" id="cd00071">
    <property type="entry name" value="GMPK"/>
    <property type="match status" value="1"/>
</dbReference>
<dbReference type="FunFam" id="3.40.50.300:FF:000855">
    <property type="entry name" value="Guanylate kinase"/>
    <property type="match status" value="1"/>
</dbReference>
<dbReference type="FunFam" id="3.30.63.10:FF:000002">
    <property type="entry name" value="Guanylate kinase 1"/>
    <property type="match status" value="1"/>
</dbReference>
<dbReference type="Gene3D" id="3.30.63.10">
    <property type="entry name" value="Guanylate Kinase phosphate binding domain"/>
    <property type="match status" value="1"/>
</dbReference>
<dbReference type="Gene3D" id="3.40.50.300">
    <property type="entry name" value="P-loop containing nucleotide triphosphate hydrolases"/>
    <property type="match status" value="2"/>
</dbReference>
<dbReference type="HAMAP" id="MF_00328">
    <property type="entry name" value="Guanylate_kinase"/>
    <property type="match status" value="1"/>
</dbReference>
<dbReference type="InterPro" id="IPR008145">
    <property type="entry name" value="GK/Ca_channel_bsu"/>
</dbReference>
<dbReference type="InterPro" id="IPR008144">
    <property type="entry name" value="Guanylate_kin-like_dom"/>
</dbReference>
<dbReference type="InterPro" id="IPR017665">
    <property type="entry name" value="Guanylate_kinase"/>
</dbReference>
<dbReference type="InterPro" id="IPR020590">
    <property type="entry name" value="Guanylate_kinase_CS"/>
</dbReference>
<dbReference type="InterPro" id="IPR027417">
    <property type="entry name" value="P-loop_NTPase"/>
</dbReference>
<dbReference type="NCBIfam" id="TIGR03263">
    <property type="entry name" value="guanyl_kin"/>
    <property type="match status" value="1"/>
</dbReference>
<dbReference type="PANTHER" id="PTHR23117:SF13">
    <property type="entry name" value="GUANYLATE KINASE"/>
    <property type="match status" value="1"/>
</dbReference>
<dbReference type="PANTHER" id="PTHR23117">
    <property type="entry name" value="GUANYLATE KINASE-RELATED"/>
    <property type="match status" value="1"/>
</dbReference>
<dbReference type="Pfam" id="PF00625">
    <property type="entry name" value="Guanylate_kin"/>
    <property type="match status" value="1"/>
</dbReference>
<dbReference type="SMART" id="SM00072">
    <property type="entry name" value="GuKc"/>
    <property type="match status" value="1"/>
</dbReference>
<dbReference type="SUPFAM" id="SSF52540">
    <property type="entry name" value="P-loop containing nucleoside triphosphate hydrolases"/>
    <property type="match status" value="1"/>
</dbReference>
<dbReference type="PROSITE" id="PS00856">
    <property type="entry name" value="GUANYLATE_KINASE_1"/>
    <property type="match status" value="1"/>
</dbReference>
<dbReference type="PROSITE" id="PS50052">
    <property type="entry name" value="GUANYLATE_KINASE_2"/>
    <property type="match status" value="1"/>
</dbReference>
<comment type="function">
    <text evidence="1">Essential for recycling GMP and indirectly, cGMP.</text>
</comment>
<comment type="catalytic activity">
    <reaction evidence="1">
        <text>GMP + ATP = GDP + ADP</text>
        <dbReference type="Rhea" id="RHEA:20780"/>
        <dbReference type="ChEBI" id="CHEBI:30616"/>
        <dbReference type="ChEBI" id="CHEBI:58115"/>
        <dbReference type="ChEBI" id="CHEBI:58189"/>
        <dbReference type="ChEBI" id="CHEBI:456216"/>
        <dbReference type="EC" id="2.7.4.8"/>
    </reaction>
</comment>
<comment type="subcellular location">
    <subcellularLocation>
        <location evidence="1">Cytoplasm</location>
    </subcellularLocation>
</comment>
<comment type="similarity">
    <text evidence="1">Belongs to the guanylate kinase family.</text>
</comment>
<reference key="1">
    <citation type="journal article" date="2006" name="Proc. Natl. Acad. Sci. U.S.A.">
        <title>Molecular genetic anatomy of inter- and intraserotype variation in the human bacterial pathogen group A Streptococcus.</title>
        <authorList>
            <person name="Beres S.B."/>
            <person name="Richter E.W."/>
            <person name="Nagiec M.J."/>
            <person name="Sumby P."/>
            <person name="Porcella S.F."/>
            <person name="DeLeo F.R."/>
            <person name="Musser J.M."/>
        </authorList>
    </citation>
    <scope>NUCLEOTIDE SEQUENCE [LARGE SCALE GENOMIC DNA]</scope>
    <source>
        <strain>MGAS10270</strain>
    </source>
</reference>
<sequence length="211" mass="24186">MSERGLLIVFSGPSGVGKGTVRQEIFSTPDHKFEYSVSMTTRPQRPGEVDGVDYFFRTREEFEELIKTGQMLEYAEYVGNYYGTPLTYVNETLDKGIDVFLEIEVQGALQVKSKVPDGVFVFLTPPDLDELEDRLVGRGTDSQEVIAQRIERAKEEIALMREYDYAVVNDEVALAAERVKRIIETEHFRVERVIGRYDKMIKITKNPFKAK</sequence>